<gene>
    <name evidence="1" type="primary">cca</name>
    <name type="ordered locus">SPC_3280</name>
</gene>
<protein>
    <recommendedName>
        <fullName evidence="1">Multifunctional CCA protein</fullName>
    </recommendedName>
    <domain>
        <recommendedName>
            <fullName evidence="1">CCA-adding enzyme</fullName>
            <ecNumber evidence="1">2.7.7.72</ecNumber>
        </recommendedName>
        <alternativeName>
            <fullName evidence="1">CCA tRNA nucleotidyltransferase</fullName>
        </alternativeName>
        <alternativeName>
            <fullName evidence="1">tRNA CCA-pyrophosphorylase</fullName>
        </alternativeName>
        <alternativeName>
            <fullName evidence="1">tRNA adenylyl-/cytidylyl-transferase</fullName>
        </alternativeName>
        <alternativeName>
            <fullName evidence="1">tRNA nucleotidyltransferase</fullName>
        </alternativeName>
        <alternativeName>
            <fullName evidence="1">tRNA-NT</fullName>
        </alternativeName>
    </domain>
    <domain>
        <recommendedName>
            <fullName evidence="1">2'-nucleotidase</fullName>
            <ecNumber evidence="1">3.1.3.-</ecNumber>
        </recommendedName>
    </domain>
    <domain>
        <recommendedName>
            <fullName evidence="1">2',3'-cyclic phosphodiesterase</fullName>
            <ecNumber evidence="1">3.1.4.-</ecNumber>
        </recommendedName>
    </domain>
    <domain>
        <recommendedName>
            <fullName evidence="1">Phosphatase</fullName>
            <ecNumber evidence="1">3.1.3.-</ecNumber>
        </recommendedName>
    </domain>
</protein>
<reference key="1">
    <citation type="journal article" date="2009" name="PLoS ONE">
        <title>Salmonella paratyphi C: genetic divergence from Salmonella choleraesuis and pathogenic convergence with Salmonella typhi.</title>
        <authorList>
            <person name="Liu W.-Q."/>
            <person name="Feng Y."/>
            <person name="Wang Y."/>
            <person name="Zou Q.-H."/>
            <person name="Chen F."/>
            <person name="Guo J.-T."/>
            <person name="Peng Y.-H."/>
            <person name="Jin Y."/>
            <person name="Li Y.-G."/>
            <person name="Hu S.-N."/>
            <person name="Johnston R.N."/>
            <person name="Liu G.-R."/>
            <person name="Liu S.-L."/>
        </authorList>
    </citation>
    <scope>NUCLEOTIDE SEQUENCE [LARGE SCALE GENOMIC DNA]</scope>
    <source>
        <strain>RKS4594</strain>
    </source>
</reference>
<proteinExistence type="inferred from homology"/>
<name>CCA_SALPC</name>
<sequence>MKIYLVGGAVRDALLGLPVKDKDWVVVGATPQEMLDAGYQQVGRDFPVFLHPQTHEEYALARTERKSGSGYTGFTCYAAPDVTLEADLQRRDLTINALARDDDGQIIDPYHGRRDLEARLLRHVSPAFGEDPLRVLRVARFAARYAHLSFRIADETLALMREMTAAGELEHLTPERVWKETENALTTRNPQVYFQVLRDCGALRVLFPEIDALFGVPAPAKWHPEIDTGVHTLMTLSMAAMLSPQLDVRFATLCHDLGKGLTPKNLWPRHHGHGPAGVKLVEQLCQRLRVPNDLRDLAKLVAEYHDLIHTFPILQPKTIVKLFDAIDAWRKPQRVEQIALTSEADVRGRTGFEASDYPQGRWLREAWQVAQAVPTKEVVEAGFKGIEIREELTKRRIAAVANWKEKRCPPPAS</sequence>
<feature type="chain" id="PRO_1000165123" description="Multifunctional CCA protein">
    <location>
        <begin position="1"/>
        <end position="413"/>
    </location>
</feature>
<feature type="domain" description="HD" evidence="1">
    <location>
        <begin position="228"/>
        <end position="329"/>
    </location>
</feature>
<feature type="binding site" evidence="1">
    <location>
        <position position="8"/>
    </location>
    <ligand>
        <name>ATP</name>
        <dbReference type="ChEBI" id="CHEBI:30616"/>
    </ligand>
</feature>
<feature type="binding site" evidence="1">
    <location>
        <position position="8"/>
    </location>
    <ligand>
        <name>CTP</name>
        <dbReference type="ChEBI" id="CHEBI:37563"/>
    </ligand>
</feature>
<feature type="binding site" evidence="1">
    <location>
        <position position="11"/>
    </location>
    <ligand>
        <name>ATP</name>
        <dbReference type="ChEBI" id="CHEBI:30616"/>
    </ligand>
</feature>
<feature type="binding site" evidence="1">
    <location>
        <position position="11"/>
    </location>
    <ligand>
        <name>CTP</name>
        <dbReference type="ChEBI" id="CHEBI:37563"/>
    </ligand>
</feature>
<feature type="binding site" evidence="1">
    <location>
        <position position="21"/>
    </location>
    <ligand>
        <name>Mg(2+)</name>
        <dbReference type="ChEBI" id="CHEBI:18420"/>
    </ligand>
</feature>
<feature type="binding site" evidence="1">
    <location>
        <position position="23"/>
    </location>
    <ligand>
        <name>Mg(2+)</name>
        <dbReference type="ChEBI" id="CHEBI:18420"/>
    </ligand>
</feature>
<feature type="binding site" evidence="1">
    <location>
        <position position="91"/>
    </location>
    <ligand>
        <name>ATP</name>
        <dbReference type="ChEBI" id="CHEBI:30616"/>
    </ligand>
</feature>
<feature type="binding site" evidence="1">
    <location>
        <position position="91"/>
    </location>
    <ligand>
        <name>CTP</name>
        <dbReference type="ChEBI" id="CHEBI:37563"/>
    </ligand>
</feature>
<feature type="binding site" evidence="1">
    <location>
        <position position="137"/>
    </location>
    <ligand>
        <name>ATP</name>
        <dbReference type="ChEBI" id="CHEBI:30616"/>
    </ligand>
</feature>
<feature type="binding site" evidence="1">
    <location>
        <position position="137"/>
    </location>
    <ligand>
        <name>CTP</name>
        <dbReference type="ChEBI" id="CHEBI:37563"/>
    </ligand>
</feature>
<feature type="binding site" evidence="1">
    <location>
        <position position="140"/>
    </location>
    <ligand>
        <name>ATP</name>
        <dbReference type="ChEBI" id="CHEBI:30616"/>
    </ligand>
</feature>
<feature type="binding site" evidence="1">
    <location>
        <position position="140"/>
    </location>
    <ligand>
        <name>CTP</name>
        <dbReference type="ChEBI" id="CHEBI:37563"/>
    </ligand>
</feature>
<organism>
    <name type="scientific">Salmonella paratyphi C (strain RKS4594)</name>
    <dbReference type="NCBI Taxonomy" id="476213"/>
    <lineage>
        <taxon>Bacteria</taxon>
        <taxon>Pseudomonadati</taxon>
        <taxon>Pseudomonadota</taxon>
        <taxon>Gammaproteobacteria</taxon>
        <taxon>Enterobacterales</taxon>
        <taxon>Enterobacteriaceae</taxon>
        <taxon>Salmonella</taxon>
    </lineage>
</organism>
<comment type="function">
    <text evidence="1">Catalyzes the addition and repair of the essential 3'-terminal CCA sequence in tRNAs without using a nucleic acid template. Adds these three nucleotides in the order of C, C, and A to the tRNA nucleotide-73, using CTP and ATP as substrates and producing inorganic pyrophosphate. tRNA 3'-terminal CCA addition is required both for tRNA processing and repair. Also involved in tRNA surveillance by mediating tandem CCA addition to generate a CCACCA at the 3' terminus of unstable tRNAs. While stable tRNAs receive only 3'-terminal CCA, unstable tRNAs are marked with CCACCA and rapidly degraded.</text>
</comment>
<comment type="catalytic activity">
    <reaction evidence="1">
        <text>a tRNA precursor + 2 CTP + ATP = a tRNA with a 3' CCA end + 3 diphosphate</text>
        <dbReference type="Rhea" id="RHEA:14433"/>
        <dbReference type="Rhea" id="RHEA-COMP:10465"/>
        <dbReference type="Rhea" id="RHEA-COMP:10468"/>
        <dbReference type="ChEBI" id="CHEBI:30616"/>
        <dbReference type="ChEBI" id="CHEBI:33019"/>
        <dbReference type="ChEBI" id="CHEBI:37563"/>
        <dbReference type="ChEBI" id="CHEBI:74896"/>
        <dbReference type="ChEBI" id="CHEBI:83071"/>
        <dbReference type="EC" id="2.7.7.72"/>
    </reaction>
</comment>
<comment type="catalytic activity">
    <reaction evidence="1">
        <text>a tRNA with a 3' CCA end + 2 CTP + ATP = a tRNA with a 3' CCACCA end + 3 diphosphate</text>
        <dbReference type="Rhea" id="RHEA:76235"/>
        <dbReference type="Rhea" id="RHEA-COMP:10468"/>
        <dbReference type="Rhea" id="RHEA-COMP:18655"/>
        <dbReference type="ChEBI" id="CHEBI:30616"/>
        <dbReference type="ChEBI" id="CHEBI:33019"/>
        <dbReference type="ChEBI" id="CHEBI:37563"/>
        <dbReference type="ChEBI" id="CHEBI:83071"/>
        <dbReference type="ChEBI" id="CHEBI:195187"/>
    </reaction>
    <physiologicalReaction direction="left-to-right" evidence="1">
        <dbReference type="Rhea" id="RHEA:76236"/>
    </physiologicalReaction>
</comment>
<comment type="cofactor">
    <cofactor evidence="1">
        <name>Mg(2+)</name>
        <dbReference type="ChEBI" id="CHEBI:18420"/>
    </cofactor>
    <text evidence="1">Magnesium is required for nucleotidyltransferase activity.</text>
</comment>
<comment type="cofactor">
    <cofactor evidence="1">
        <name>Ni(2+)</name>
        <dbReference type="ChEBI" id="CHEBI:49786"/>
    </cofactor>
    <text evidence="1">Nickel for phosphatase activity.</text>
</comment>
<comment type="subunit">
    <text evidence="1">Monomer. Can also form homodimers and oligomers.</text>
</comment>
<comment type="domain">
    <text evidence="1">Comprises two domains: an N-terminal domain containing the nucleotidyltransferase activity and a C-terminal HD domain associated with both phosphodiesterase and phosphatase activities.</text>
</comment>
<comment type="miscellaneous">
    <text evidence="1">A single active site specifically recognizes both ATP and CTP and is responsible for their addition.</text>
</comment>
<comment type="similarity">
    <text evidence="1">Belongs to the tRNA nucleotidyltransferase/poly(A) polymerase family. Bacterial CCA-adding enzyme type 1 subfamily.</text>
</comment>
<evidence type="ECO:0000255" key="1">
    <source>
        <dbReference type="HAMAP-Rule" id="MF_01261"/>
    </source>
</evidence>
<dbReference type="EC" id="2.7.7.72" evidence="1"/>
<dbReference type="EC" id="3.1.3.-" evidence="1"/>
<dbReference type="EC" id="3.1.4.-" evidence="1"/>
<dbReference type="EMBL" id="CP000857">
    <property type="protein sequence ID" value="ACN47365.1"/>
    <property type="molecule type" value="Genomic_DNA"/>
</dbReference>
<dbReference type="RefSeq" id="WP_000708448.1">
    <property type="nucleotide sequence ID" value="NC_012125.1"/>
</dbReference>
<dbReference type="SMR" id="C0PYX7"/>
<dbReference type="KEGG" id="sei:SPC_3280"/>
<dbReference type="HOGENOM" id="CLU_015961_1_1_6"/>
<dbReference type="Proteomes" id="UP000001599">
    <property type="component" value="Chromosome"/>
</dbReference>
<dbReference type="GO" id="GO:0005524">
    <property type="term" value="F:ATP binding"/>
    <property type="evidence" value="ECO:0007669"/>
    <property type="project" value="UniProtKB-UniRule"/>
</dbReference>
<dbReference type="GO" id="GO:0004810">
    <property type="term" value="F:CCA tRNA nucleotidyltransferase activity"/>
    <property type="evidence" value="ECO:0007669"/>
    <property type="project" value="UniProtKB-UniRule"/>
</dbReference>
<dbReference type="GO" id="GO:0004112">
    <property type="term" value="F:cyclic-nucleotide phosphodiesterase activity"/>
    <property type="evidence" value="ECO:0007669"/>
    <property type="project" value="UniProtKB-UniRule"/>
</dbReference>
<dbReference type="GO" id="GO:0000287">
    <property type="term" value="F:magnesium ion binding"/>
    <property type="evidence" value="ECO:0007669"/>
    <property type="project" value="UniProtKB-UniRule"/>
</dbReference>
<dbReference type="GO" id="GO:0016791">
    <property type="term" value="F:phosphatase activity"/>
    <property type="evidence" value="ECO:0007669"/>
    <property type="project" value="UniProtKB-UniRule"/>
</dbReference>
<dbReference type="GO" id="GO:0000049">
    <property type="term" value="F:tRNA binding"/>
    <property type="evidence" value="ECO:0007669"/>
    <property type="project" value="UniProtKB-UniRule"/>
</dbReference>
<dbReference type="GO" id="GO:0042245">
    <property type="term" value="P:RNA repair"/>
    <property type="evidence" value="ECO:0007669"/>
    <property type="project" value="UniProtKB-KW"/>
</dbReference>
<dbReference type="GO" id="GO:0001680">
    <property type="term" value="P:tRNA 3'-terminal CCA addition"/>
    <property type="evidence" value="ECO:0007669"/>
    <property type="project" value="UniProtKB-UniRule"/>
</dbReference>
<dbReference type="CDD" id="cd00077">
    <property type="entry name" value="HDc"/>
    <property type="match status" value="1"/>
</dbReference>
<dbReference type="CDD" id="cd05398">
    <property type="entry name" value="NT_ClassII-CCAase"/>
    <property type="match status" value="1"/>
</dbReference>
<dbReference type="FunFam" id="1.10.3090.10:FF:000001">
    <property type="entry name" value="Multifunctional CCA protein"/>
    <property type="match status" value="1"/>
</dbReference>
<dbReference type="FunFam" id="3.30.460.10:FF:000016">
    <property type="entry name" value="Multifunctional CCA protein"/>
    <property type="match status" value="1"/>
</dbReference>
<dbReference type="Gene3D" id="3.30.460.10">
    <property type="entry name" value="Beta Polymerase, domain 2"/>
    <property type="match status" value="1"/>
</dbReference>
<dbReference type="Gene3D" id="1.10.3090.10">
    <property type="entry name" value="cca-adding enzyme, domain 2"/>
    <property type="match status" value="1"/>
</dbReference>
<dbReference type="HAMAP" id="MF_01261">
    <property type="entry name" value="CCA_bact_type1"/>
    <property type="match status" value="1"/>
</dbReference>
<dbReference type="HAMAP" id="MF_01262">
    <property type="entry name" value="CCA_bact_type2"/>
    <property type="match status" value="1"/>
</dbReference>
<dbReference type="InterPro" id="IPR012006">
    <property type="entry name" value="CCA_bact"/>
</dbReference>
<dbReference type="InterPro" id="IPR003607">
    <property type="entry name" value="HD/PDEase_dom"/>
</dbReference>
<dbReference type="InterPro" id="IPR006674">
    <property type="entry name" value="HD_domain"/>
</dbReference>
<dbReference type="InterPro" id="IPR043519">
    <property type="entry name" value="NT_sf"/>
</dbReference>
<dbReference type="InterPro" id="IPR002646">
    <property type="entry name" value="PolA_pol_head_dom"/>
</dbReference>
<dbReference type="InterPro" id="IPR032828">
    <property type="entry name" value="PolyA_RNA-bd"/>
</dbReference>
<dbReference type="InterPro" id="IPR050124">
    <property type="entry name" value="tRNA_CCA-adding_enzyme"/>
</dbReference>
<dbReference type="NCBIfam" id="NF008137">
    <property type="entry name" value="PRK10885.1"/>
    <property type="match status" value="1"/>
</dbReference>
<dbReference type="PANTHER" id="PTHR47545">
    <property type="entry name" value="MULTIFUNCTIONAL CCA PROTEIN"/>
    <property type="match status" value="1"/>
</dbReference>
<dbReference type="PANTHER" id="PTHR47545:SF1">
    <property type="entry name" value="MULTIFUNCTIONAL CCA PROTEIN"/>
    <property type="match status" value="1"/>
</dbReference>
<dbReference type="Pfam" id="PF01966">
    <property type="entry name" value="HD"/>
    <property type="match status" value="1"/>
</dbReference>
<dbReference type="Pfam" id="PF01743">
    <property type="entry name" value="PolyA_pol"/>
    <property type="match status" value="1"/>
</dbReference>
<dbReference type="Pfam" id="PF12627">
    <property type="entry name" value="PolyA_pol_RNAbd"/>
    <property type="match status" value="1"/>
</dbReference>
<dbReference type="PIRSF" id="PIRSF000813">
    <property type="entry name" value="CCA_bact"/>
    <property type="match status" value="1"/>
</dbReference>
<dbReference type="SMART" id="SM00471">
    <property type="entry name" value="HDc"/>
    <property type="match status" value="1"/>
</dbReference>
<dbReference type="SUPFAM" id="SSF81301">
    <property type="entry name" value="Nucleotidyltransferase"/>
    <property type="match status" value="1"/>
</dbReference>
<dbReference type="SUPFAM" id="SSF81891">
    <property type="entry name" value="Poly A polymerase C-terminal region-like"/>
    <property type="match status" value="1"/>
</dbReference>
<dbReference type="PROSITE" id="PS51831">
    <property type="entry name" value="HD"/>
    <property type="match status" value="1"/>
</dbReference>
<keyword id="KW-0067">ATP-binding</keyword>
<keyword id="KW-0378">Hydrolase</keyword>
<keyword id="KW-0460">Magnesium</keyword>
<keyword id="KW-0479">Metal-binding</keyword>
<keyword id="KW-0511">Multifunctional enzyme</keyword>
<keyword id="KW-0533">Nickel</keyword>
<keyword id="KW-0547">Nucleotide-binding</keyword>
<keyword id="KW-0548">Nucleotidyltransferase</keyword>
<keyword id="KW-0692">RNA repair</keyword>
<keyword id="KW-0694">RNA-binding</keyword>
<keyword id="KW-0808">Transferase</keyword>
<keyword id="KW-0819">tRNA processing</keyword>
<accession>C0PYX7</accession>